<accession>B0S065</accession>
<protein>
    <recommendedName>
        <fullName evidence="1">Large ribosomal subunit protein bL12</fullName>
    </recommendedName>
    <alternativeName>
        <fullName evidence="2">50S ribosomal protein L7/L12</fullName>
    </alternativeName>
</protein>
<feature type="chain" id="PRO_1000121440" description="Large ribosomal subunit protein bL12">
    <location>
        <begin position="1"/>
        <end position="123"/>
    </location>
</feature>
<reference key="1">
    <citation type="journal article" date="2008" name="DNA Res.">
        <title>Complete genome sequence of Finegoldia magna, an anaerobic opportunistic pathogen.</title>
        <authorList>
            <person name="Goto T."/>
            <person name="Yamashita A."/>
            <person name="Hirakawa H."/>
            <person name="Matsutani M."/>
            <person name="Todo K."/>
            <person name="Ohshima K."/>
            <person name="Toh H."/>
            <person name="Miyamoto K."/>
            <person name="Kuhara S."/>
            <person name="Hattori M."/>
            <person name="Shimizu T."/>
            <person name="Akimoto S."/>
        </authorList>
    </citation>
    <scope>NUCLEOTIDE SEQUENCE [LARGE SCALE GENOMIC DNA]</scope>
    <source>
        <strain>ATCC 29328 / DSM 20472 / WAL 2508</strain>
    </source>
</reference>
<evidence type="ECO:0000255" key="1">
    <source>
        <dbReference type="HAMAP-Rule" id="MF_00368"/>
    </source>
</evidence>
<evidence type="ECO:0000305" key="2"/>
<name>RL7_FINM2</name>
<dbReference type="EMBL" id="AP008971">
    <property type="protein sequence ID" value="BAG07961.1"/>
    <property type="molecule type" value="Genomic_DNA"/>
</dbReference>
<dbReference type="RefSeq" id="WP_012290468.1">
    <property type="nucleotide sequence ID" value="NC_010376.1"/>
</dbReference>
<dbReference type="SMR" id="B0S065"/>
<dbReference type="STRING" id="334413.FMG_0543"/>
<dbReference type="KEGG" id="fma:FMG_0543"/>
<dbReference type="eggNOG" id="COG0222">
    <property type="taxonomic scope" value="Bacteria"/>
</dbReference>
<dbReference type="HOGENOM" id="CLU_086499_3_2_9"/>
<dbReference type="Proteomes" id="UP000001319">
    <property type="component" value="Chromosome"/>
</dbReference>
<dbReference type="GO" id="GO:0022625">
    <property type="term" value="C:cytosolic large ribosomal subunit"/>
    <property type="evidence" value="ECO:0007669"/>
    <property type="project" value="TreeGrafter"/>
</dbReference>
<dbReference type="GO" id="GO:0003729">
    <property type="term" value="F:mRNA binding"/>
    <property type="evidence" value="ECO:0007669"/>
    <property type="project" value="TreeGrafter"/>
</dbReference>
<dbReference type="GO" id="GO:0003735">
    <property type="term" value="F:structural constituent of ribosome"/>
    <property type="evidence" value="ECO:0007669"/>
    <property type="project" value="InterPro"/>
</dbReference>
<dbReference type="GO" id="GO:0006412">
    <property type="term" value="P:translation"/>
    <property type="evidence" value="ECO:0007669"/>
    <property type="project" value="UniProtKB-UniRule"/>
</dbReference>
<dbReference type="CDD" id="cd00387">
    <property type="entry name" value="Ribosomal_L7_L12"/>
    <property type="match status" value="1"/>
</dbReference>
<dbReference type="FunFam" id="3.30.1390.10:FF:000001">
    <property type="entry name" value="50S ribosomal protein L7/L12"/>
    <property type="match status" value="1"/>
</dbReference>
<dbReference type="Gene3D" id="3.30.1390.10">
    <property type="match status" value="1"/>
</dbReference>
<dbReference type="Gene3D" id="1.20.5.710">
    <property type="entry name" value="Single helix bin"/>
    <property type="match status" value="1"/>
</dbReference>
<dbReference type="HAMAP" id="MF_00368">
    <property type="entry name" value="Ribosomal_bL12"/>
    <property type="match status" value="1"/>
</dbReference>
<dbReference type="InterPro" id="IPR000206">
    <property type="entry name" value="Ribosomal_bL12"/>
</dbReference>
<dbReference type="InterPro" id="IPR013823">
    <property type="entry name" value="Ribosomal_bL12_C"/>
</dbReference>
<dbReference type="InterPro" id="IPR014719">
    <property type="entry name" value="Ribosomal_bL12_C/ClpS-like"/>
</dbReference>
<dbReference type="InterPro" id="IPR008932">
    <property type="entry name" value="Ribosomal_bL12_oligo"/>
</dbReference>
<dbReference type="InterPro" id="IPR036235">
    <property type="entry name" value="Ribosomal_bL12_oligo_N_sf"/>
</dbReference>
<dbReference type="NCBIfam" id="TIGR00855">
    <property type="entry name" value="L12"/>
    <property type="match status" value="1"/>
</dbReference>
<dbReference type="PANTHER" id="PTHR45987">
    <property type="entry name" value="39S RIBOSOMAL PROTEIN L12"/>
    <property type="match status" value="1"/>
</dbReference>
<dbReference type="PANTHER" id="PTHR45987:SF4">
    <property type="entry name" value="LARGE RIBOSOMAL SUBUNIT PROTEIN BL12M"/>
    <property type="match status" value="1"/>
</dbReference>
<dbReference type="Pfam" id="PF00542">
    <property type="entry name" value="Ribosomal_L12"/>
    <property type="match status" value="1"/>
</dbReference>
<dbReference type="Pfam" id="PF16320">
    <property type="entry name" value="Ribosomal_L12_N"/>
    <property type="match status" value="1"/>
</dbReference>
<dbReference type="SUPFAM" id="SSF54736">
    <property type="entry name" value="ClpS-like"/>
    <property type="match status" value="1"/>
</dbReference>
<dbReference type="SUPFAM" id="SSF48300">
    <property type="entry name" value="Ribosomal protein L7/12, oligomerisation (N-terminal) domain"/>
    <property type="match status" value="1"/>
</dbReference>
<proteinExistence type="inferred from homology"/>
<organism>
    <name type="scientific">Finegoldia magna (strain ATCC 29328 / DSM 20472 / WAL 2508)</name>
    <name type="common">Peptostreptococcus magnus</name>
    <dbReference type="NCBI Taxonomy" id="334413"/>
    <lineage>
        <taxon>Bacteria</taxon>
        <taxon>Bacillati</taxon>
        <taxon>Bacillota</taxon>
        <taxon>Tissierellia</taxon>
        <taxon>Tissierellales</taxon>
        <taxon>Peptoniphilaceae</taxon>
        <taxon>Finegoldia</taxon>
    </lineage>
</organism>
<gene>
    <name evidence="1" type="primary">rplL</name>
    <name type="ordered locus">FMG_0543</name>
</gene>
<sequence length="123" mass="12573">MSIDEILEAVEGLTVLELNELVEKAEEKFGVSAAAPVAVAGGAPAAGGAAAEEKSEFDVILASAGEAKMKVIKAVKDLTGLGLKDAKALVDEAPKAIKEGASKEEAEELKAKLEEVGATIELK</sequence>
<comment type="function">
    <text evidence="1">Forms part of the ribosomal stalk which helps the ribosome interact with GTP-bound translation factors. Is thus essential for accurate translation.</text>
</comment>
<comment type="subunit">
    <text evidence="1">Homodimer. Part of the ribosomal stalk of the 50S ribosomal subunit. Forms a multimeric L10(L12)X complex, where L10 forms an elongated spine to which 2 to 4 L12 dimers bind in a sequential fashion. Binds GTP-bound translation factors.</text>
</comment>
<comment type="similarity">
    <text evidence="1">Belongs to the bacterial ribosomal protein bL12 family.</text>
</comment>
<keyword id="KW-1185">Reference proteome</keyword>
<keyword id="KW-0687">Ribonucleoprotein</keyword>
<keyword id="KW-0689">Ribosomal protein</keyword>